<proteinExistence type="inferred from homology"/>
<organism>
    <name type="scientific">Parasynechococcus marenigrum (strain WH8102)</name>
    <dbReference type="NCBI Taxonomy" id="84588"/>
    <lineage>
        <taxon>Bacteria</taxon>
        <taxon>Bacillati</taxon>
        <taxon>Cyanobacteriota</taxon>
        <taxon>Cyanophyceae</taxon>
        <taxon>Synechococcales</taxon>
        <taxon>Prochlorococcaceae</taxon>
        <taxon>Parasynechococcus</taxon>
        <taxon>Parasynechococcus marenigrum</taxon>
    </lineage>
</organism>
<name>GPMI_PARMW</name>
<comment type="function">
    <text evidence="1">Catalyzes the interconversion of 2-phosphoglycerate and 3-phosphoglycerate.</text>
</comment>
<comment type="catalytic activity">
    <reaction evidence="1">
        <text>(2R)-2-phosphoglycerate = (2R)-3-phosphoglycerate</text>
        <dbReference type="Rhea" id="RHEA:15901"/>
        <dbReference type="ChEBI" id="CHEBI:58272"/>
        <dbReference type="ChEBI" id="CHEBI:58289"/>
        <dbReference type="EC" id="5.4.2.12"/>
    </reaction>
</comment>
<comment type="cofactor">
    <cofactor evidence="1">
        <name>Mn(2+)</name>
        <dbReference type="ChEBI" id="CHEBI:29035"/>
    </cofactor>
    <text evidence="1">Binds 2 manganese ions per subunit.</text>
</comment>
<comment type="pathway">
    <text evidence="1">Carbohydrate degradation; glycolysis; pyruvate from D-glyceraldehyde 3-phosphate: step 3/5.</text>
</comment>
<comment type="subunit">
    <text evidence="1">Monomer.</text>
</comment>
<comment type="similarity">
    <text evidence="1">Belongs to the BPG-independent phosphoglycerate mutase family.</text>
</comment>
<evidence type="ECO:0000255" key="1">
    <source>
        <dbReference type="HAMAP-Rule" id="MF_01038"/>
    </source>
</evidence>
<keyword id="KW-0324">Glycolysis</keyword>
<keyword id="KW-0413">Isomerase</keyword>
<keyword id="KW-0464">Manganese</keyword>
<keyword id="KW-0479">Metal-binding</keyword>
<sequence length="543" mass="58829">MDQSSGKGSGRDVGVAPVVLTILDGWGHRNDSEHNAIRQGDTPVMEALWHAYPHALIQASGSHVGLPDHQMGNSEVGHLTIGAGRIIRQELVRISDTVRDDQLNNTPALVELAEHLQNDTGTLHLLGLCSDGGVHSHVNHLCGLIHWAAAAGIKKVAVHAITDGRDTPTQSAMGSITLVQRAMEEAGVGHLASLCGRYWAMDRDKRWDRTEKAYDLYTDPTRSISDQSPQQLLAESYAAGITDEFLKPVRLSDDVMQDGDSVLVFNFRPDRARQIVQTLCLDDFDGFERRTTPKLDVVTFTQVEQDLPVSVAFPPEPLDDLLGQVVAEAGLRQYRTAETEKYPHVTYFMNGGIEQPLPGEERHLVPSPRVATYDLSPAMSADQLTDSCIDAIDQGTYSLIVINYANPDMVGHTGVMDAATEAIATVDRCIGRLLDAVGRRGGTMLITADHGNAELMQGPDGQAWTAHTTNPVPCILVEGEQRKLPGHGNDISLREDGGLADIAPTLLQILNLEQPAAMTGRSLIEPVSNVDPSPLSARLPLPV</sequence>
<accession>Q7U8U2</accession>
<protein>
    <recommendedName>
        <fullName evidence="1">2,3-bisphosphoglycerate-independent phosphoglycerate mutase</fullName>
        <shortName evidence="1">BPG-independent PGAM</shortName>
        <shortName evidence="1">Phosphoglyceromutase</shortName>
        <shortName evidence="1">iPGM</shortName>
        <ecNumber evidence="1">5.4.2.12</ecNumber>
    </recommendedName>
</protein>
<reference key="1">
    <citation type="journal article" date="2003" name="Nature">
        <title>The genome of a motile marine Synechococcus.</title>
        <authorList>
            <person name="Palenik B."/>
            <person name="Brahamsha B."/>
            <person name="Larimer F.W."/>
            <person name="Land M.L."/>
            <person name="Hauser L."/>
            <person name="Chain P."/>
            <person name="Lamerdin J.E."/>
            <person name="Regala W."/>
            <person name="Allen E.E."/>
            <person name="McCarren J."/>
            <person name="Paulsen I.T."/>
            <person name="Dufresne A."/>
            <person name="Partensky F."/>
            <person name="Webb E.A."/>
            <person name="Waterbury J."/>
        </authorList>
    </citation>
    <scope>NUCLEOTIDE SEQUENCE [LARGE SCALE GENOMIC DNA]</scope>
    <source>
        <strain>WH8102</strain>
    </source>
</reference>
<dbReference type="EC" id="5.4.2.12" evidence="1"/>
<dbReference type="EMBL" id="BX569690">
    <property type="protein sequence ID" value="CAE07034.1"/>
    <property type="molecule type" value="Genomic_DNA"/>
</dbReference>
<dbReference type="RefSeq" id="WP_011127390.1">
    <property type="nucleotide sequence ID" value="NC_005070.1"/>
</dbReference>
<dbReference type="SMR" id="Q7U8U2"/>
<dbReference type="STRING" id="84588.SYNW0519"/>
<dbReference type="KEGG" id="syw:SYNW0519"/>
<dbReference type="eggNOG" id="COG0696">
    <property type="taxonomic scope" value="Bacteria"/>
</dbReference>
<dbReference type="HOGENOM" id="CLU_026099_2_0_3"/>
<dbReference type="UniPathway" id="UPA00109">
    <property type="reaction ID" value="UER00186"/>
</dbReference>
<dbReference type="Proteomes" id="UP000001422">
    <property type="component" value="Chromosome"/>
</dbReference>
<dbReference type="GO" id="GO:0005829">
    <property type="term" value="C:cytosol"/>
    <property type="evidence" value="ECO:0007669"/>
    <property type="project" value="TreeGrafter"/>
</dbReference>
<dbReference type="GO" id="GO:0030145">
    <property type="term" value="F:manganese ion binding"/>
    <property type="evidence" value="ECO:0007669"/>
    <property type="project" value="UniProtKB-UniRule"/>
</dbReference>
<dbReference type="GO" id="GO:0004619">
    <property type="term" value="F:phosphoglycerate mutase activity"/>
    <property type="evidence" value="ECO:0007669"/>
    <property type="project" value="UniProtKB-EC"/>
</dbReference>
<dbReference type="GO" id="GO:0006007">
    <property type="term" value="P:glucose catabolic process"/>
    <property type="evidence" value="ECO:0007669"/>
    <property type="project" value="InterPro"/>
</dbReference>
<dbReference type="GO" id="GO:0006096">
    <property type="term" value="P:glycolytic process"/>
    <property type="evidence" value="ECO:0007669"/>
    <property type="project" value="UniProtKB-UniRule"/>
</dbReference>
<dbReference type="CDD" id="cd16010">
    <property type="entry name" value="iPGM"/>
    <property type="match status" value="1"/>
</dbReference>
<dbReference type="FunFam" id="3.40.1450.10:FF:000002">
    <property type="entry name" value="2,3-bisphosphoglycerate-independent phosphoglycerate mutase"/>
    <property type="match status" value="1"/>
</dbReference>
<dbReference type="Gene3D" id="3.40.720.10">
    <property type="entry name" value="Alkaline Phosphatase, subunit A"/>
    <property type="match status" value="1"/>
</dbReference>
<dbReference type="Gene3D" id="3.40.1450.10">
    <property type="entry name" value="BPG-independent phosphoglycerate mutase, domain B"/>
    <property type="match status" value="1"/>
</dbReference>
<dbReference type="HAMAP" id="MF_01038">
    <property type="entry name" value="GpmI"/>
    <property type="match status" value="1"/>
</dbReference>
<dbReference type="InterPro" id="IPR017850">
    <property type="entry name" value="Alkaline_phosphatase_core_sf"/>
</dbReference>
<dbReference type="InterPro" id="IPR011258">
    <property type="entry name" value="BPG-indep_PGM_N"/>
</dbReference>
<dbReference type="InterPro" id="IPR006124">
    <property type="entry name" value="Metalloenzyme"/>
</dbReference>
<dbReference type="InterPro" id="IPR036646">
    <property type="entry name" value="PGAM_B_sf"/>
</dbReference>
<dbReference type="InterPro" id="IPR005995">
    <property type="entry name" value="Pgm_bpd_ind"/>
</dbReference>
<dbReference type="NCBIfam" id="TIGR01307">
    <property type="entry name" value="pgm_bpd_ind"/>
    <property type="match status" value="1"/>
</dbReference>
<dbReference type="PANTHER" id="PTHR31637">
    <property type="entry name" value="2,3-BISPHOSPHOGLYCERATE-INDEPENDENT PHOSPHOGLYCERATE MUTASE"/>
    <property type="match status" value="1"/>
</dbReference>
<dbReference type="PANTHER" id="PTHR31637:SF0">
    <property type="entry name" value="2,3-BISPHOSPHOGLYCERATE-INDEPENDENT PHOSPHOGLYCERATE MUTASE"/>
    <property type="match status" value="1"/>
</dbReference>
<dbReference type="Pfam" id="PF06415">
    <property type="entry name" value="iPGM_N"/>
    <property type="match status" value="1"/>
</dbReference>
<dbReference type="Pfam" id="PF01676">
    <property type="entry name" value="Metalloenzyme"/>
    <property type="match status" value="1"/>
</dbReference>
<dbReference type="PIRSF" id="PIRSF001492">
    <property type="entry name" value="IPGAM"/>
    <property type="match status" value="1"/>
</dbReference>
<dbReference type="SUPFAM" id="SSF64158">
    <property type="entry name" value="2,3-Bisphosphoglycerate-independent phosphoglycerate mutase, substrate-binding domain"/>
    <property type="match status" value="1"/>
</dbReference>
<dbReference type="SUPFAM" id="SSF53649">
    <property type="entry name" value="Alkaline phosphatase-like"/>
    <property type="match status" value="1"/>
</dbReference>
<feature type="chain" id="PRO_0000212221" description="2,3-bisphosphoglycerate-independent phosphoglycerate mutase">
    <location>
        <begin position="1"/>
        <end position="543"/>
    </location>
</feature>
<feature type="active site" description="Phosphoserine intermediate" evidence="1">
    <location>
        <position position="74"/>
    </location>
</feature>
<feature type="binding site" evidence="1">
    <location>
        <position position="24"/>
    </location>
    <ligand>
        <name>Mn(2+)</name>
        <dbReference type="ChEBI" id="CHEBI:29035"/>
        <label>2</label>
    </ligand>
</feature>
<feature type="binding site" evidence="1">
    <location>
        <position position="74"/>
    </location>
    <ligand>
        <name>Mn(2+)</name>
        <dbReference type="ChEBI" id="CHEBI:29035"/>
        <label>2</label>
    </ligand>
</feature>
<feature type="binding site" evidence="1">
    <location>
        <position position="135"/>
    </location>
    <ligand>
        <name>substrate</name>
    </ligand>
</feature>
<feature type="binding site" evidence="1">
    <location>
        <begin position="165"/>
        <end position="166"/>
    </location>
    <ligand>
        <name>substrate</name>
    </ligand>
</feature>
<feature type="binding site" evidence="1">
    <location>
        <position position="197"/>
    </location>
    <ligand>
        <name>substrate</name>
    </ligand>
</feature>
<feature type="binding site" evidence="1">
    <location>
        <position position="203"/>
    </location>
    <ligand>
        <name>substrate</name>
    </ligand>
</feature>
<feature type="binding site" evidence="1">
    <location>
        <begin position="268"/>
        <end position="271"/>
    </location>
    <ligand>
        <name>substrate</name>
    </ligand>
</feature>
<feature type="binding site" evidence="1">
    <location>
        <position position="341"/>
    </location>
    <ligand>
        <name>substrate</name>
    </ligand>
</feature>
<feature type="binding site" evidence="1">
    <location>
        <position position="408"/>
    </location>
    <ligand>
        <name>Mn(2+)</name>
        <dbReference type="ChEBI" id="CHEBI:29035"/>
        <label>1</label>
    </ligand>
</feature>
<feature type="binding site" evidence="1">
    <location>
        <position position="412"/>
    </location>
    <ligand>
        <name>Mn(2+)</name>
        <dbReference type="ChEBI" id="CHEBI:29035"/>
        <label>1</label>
    </ligand>
</feature>
<feature type="binding site" evidence="1">
    <location>
        <position position="449"/>
    </location>
    <ligand>
        <name>Mn(2+)</name>
        <dbReference type="ChEBI" id="CHEBI:29035"/>
        <label>2</label>
    </ligand>
</feature>
<feature type="binding site" evidence="1">
    <location>
        <position position="450"/>
    </location>
    <ligand>
        <name>Mn(2+)</name>
        <dbReference type="ChEBI" id="CHEBI:29035"/>
        <label>2</label>
    </ligand>
</feature>
<feature type="binding site" evidence="1">
    <location>
        <position position="467"/>
    </location>
    <ligand>
        <name>Mn(2+)</name>
        <dbReference type="ChEBI" id="CHEBI:29035"/>
        <label>1</label>
    </ligand>
</feature>
<gene>
    <name evidence="1" type="primary">gpmI</name>
    <name type="synonym">pgmI</name>
    <name type="ordered locus">SYNW0519</name>
</gene>